<gene>
    <name evidence="1" type="primary">aspS</name>
    <name type="ordered locus">RC1_1540</name>
</gene>
<sequence length="601" mass="67205">MHAYRTHTCGQLREQNAGETVRLSGWIHRKRDHGNLLFIDLRDHYGLTQCVIDTSNPNFGTVEGLRVESVITVTGKVVARTTETVNDKLPTGRIEVQVKELEVQSAADQVPLQVNSEQDAGEELRLRYRFLDLRREKMQRNMVLRSNVIASVRRRMIEQGFTEFQTPILTASSPEGARDFLVPARNHPGKFYALPQAPQQFKQLLMVSGFDRYFQIAPCFRDEDSRADRSPGEFYQLDFEMSFVTQDDVFAAIEPVIHGIFEEFSGFTGVKKSVSPYPFVRIPFDEAMLKYGSDKPDLRNPLVIVDVTDVFRRPDVEFKAFKGVIEKGGVVRTIRVPGVADRPRSFYDKLNDWARGLGAPGLGYIVFEGGAGKGPIAKFVPEAAQAALRQATGAVDGDAVFFVCDQPGPAAKLAGQARTEIATQLDLIAKDRFEFCWIVDFPMYEYDEERKKIDFSHNPFSMPQGGLEALETQDPLTIKAFQYDIVCNGVELSSGAIRNHRPEIMYKAFEIAGYAAEDLEAKFGGMLSAFKLGAPPHGGSAPGIDRMVMLLADEPNIREVILFPLNQRAEDLLMQAPNGVAPERLKELHLKLDLPKPKIAG</sequence>
<feature type="chain" id="PRO_1000091031" description="Aspartate--tRNA(Asp/Asn) ligase">
    <location>
        <begin position="1"/>
        <end position="601"/>
    </location>
</feature>
<feature type="region of interest" description="Aspartate" evidence="1">
    <location>
        <begin position="199"/>
        <end position="202"/>
    </location>
</feature>
<feature type="binding site" evidence="1">
    <location>
        <position position="175"/>
    </location>
    <ligand>
        <name>L-aspartate</name>
        <dbReference type="ChEBI" id="CHEBI:29991"/>
    </ligand>
</feature>
<feature type="binding site" evidence="1">
    <location>
        <begin position="221"/>
        <end position="223"/>
    </location>
    <ligand>
        <name>ATP</name>
        <dbReference type="ChEBI" id="CHEBI:30616"/>
    </ligand>
</feature>
<feature type="binding site" evidence="1">
    <location>
        <position position="221"/>
    </location>
    <ligand>
        <name>L-aspartate</name>
        <dbReference type="ChEBI" id="CHEBI:29991"/>
    </ligand>
</feature>
<feature type="binding site" evidence="1">
    <location>
        <position position="457"/>
    </location>
    <ligand>
        <name>L-aspartate</name>
        <dbReference type="ChEBI" id="CHEBI:29991"/>
    </ligand>
</feature>
<feature type="binding site" evidence="1">
    <location>
        <position position="491"/>
    </location>
    <ligand>
        <name>ATP</name>
        <dbReference type="ChEBI" id="CHEBI:30616"/>
    </ligand>
</feature>
<feature type="binding site" evidence="1">
    <location>
        <position position="498"/>
    </location>
    <ligand>
        <name>L-aspartate</name>
        <dbReference type="ChEBI" id="CHEBI:29991"/>
    </ligand>
</feature>
<feature type="binding site" evidence="1">
    <location>
        <begin position="543"/>
        <end position="546"/>
    </location>
    <ligand>
        <name>ATP</name>
        <dbReference type="ChEBI" id="CHEBI:30616"/>
    </ligand>
</feature>
<feature type="site" description="Important for tRNA non-discrimination" evidence="1">
    <location>
        <position position="33"/>
    </location>
</feature>
<reference key="1">
    <citation type="submission" date="2007-03" db="EMBL/GenBank/DDBJ databases">
        <title>Genome sequence of Rhodospirillum centenum.</title>
        <authorList>
            <person name="Touchman J.W."/>
            <person name="Bauer C."/>
            <person name="Blankenship R.E."/>
        </authorList>
    </citation>
    <scope>NUCLEOTIDE SEQUENCE [LARGE SCALE GENOMIC DNA]</scope>
    <source>
        <strain>ATCC 51521 / SW</strain>
    </source>
</reference>
<organism>
    <name type="scientific">Rhodospirillum centenum (strain ATCC 51521 / SW)</name>
    <dbReference type="NCBI Taxonomy" id="414684"/>
    <lineage>
        <taxon>Bacteria</taxon>
        <taxon>Pseudomonadati</taxon>
        <taxon>Pseudomonadota</taxon>
        <taxon>Alphaproteobacteria</taxon>
        <taxon>Rhodospirillales</taxon>
        <taxon>Rhodospirillaceae</taxon>
        <taxon>Rhodospirillum</taxon>
    </lineage>
</organism>
<name>SYDND_RHOCS</name>
<dbReference type="EC" id="6.1.1.23" evidence="1"/>
<dbReference type="EMBL" id="CP000613">
    <property type="protein sequence ID" value="ACI98943.1"/>
    <property type="molecule type" value="Genomic_DNA"/>
</dbReference>
<dbReference type="RefSeq" id="WP_012566729.1">
    <property type="nucleotide sequence ID" value="NC_011420.2"/>
</dbReference>
<dbReference type="SMR" id="B6IN46"/>
<dbReference type="STRING" id="414684.RC1_1540"/>
<dbReference type="KEGG" id="rce:RC1_1540"/>
<dbReference type="eggNOG" id="COG0173">
    <property type="taxonomic scope" value="Bacteria"/>
</dbReference>
<dbReference type="HOGENOM" id="CLU_014330_3_2_5"/>
<dbReference type="OrthoDB" id="9802326at2"/>
<dbReference type="Proteomes" id="UP000001591">
    <property type="component" value="Chromosome"/>
</dbReference>
<dbReference type="GO" id="GO:0005737">
    <property type="term" value="C:cytoplasm"/>
    <property type="evidence" value="ECO:0007669"/>
    <property type="project" value="UniProtKB-SubCell"/>
</dbReference>
<dbReference type="GO" id="GO:0004815">
    <property type="term" value="F:aspartate-tRNA ligase activity"/>
    <property type="evidence" value="ECO:0007669"/>
    <property type="project" value="UniProtKB-UniRule"/>
</dbReference>
<dbReference type="GO" id="GO:0050560">
    <property type="term" value="F:aspartate-tRNA(Asn) ligase activity"/>
    <property type="evidence" value="ECO:0007669"/>
    <property type="project" value="UniProtKB-EC"/>
</dbReference>
<dbReference type="GO" id="GO:0005524">
    <property type="term" value="F:ATP binding"/>
    <property type="evidence" value="ECO:0007669"/>
    <property type="project" value="UniProtKB-UniRule"/>
</dbReference>
<dbReference type="GO" id="GO:0003676">
    <property type="term" value="F:nucleic acid binding"/>
    <property type="evidence" value="ECO:0007669"/>
    <property type="project" value="InterPro"/>
</dbReference>
<dbReference type="GO" id="GO:0006422">
    <property type="term" value="P:aspartyl-tRNA aminoacylation"/>
    <property type="evidence" value="ECO:0007669"/>
    <property type="project" value="UniProtKB-UniRule"/>
</dbReference>
<dbReference type="CDD" id="cd00777">
    <property type="entry name" value="AspRS_core"/>
    <property type="match status" value="1"/>
</dbReference>
<dbReference type="CDD" id="cd04317">
    <property type="entry name" value="EcAspRS_like_N"/>
    <property type="match status" value="1"/>
</dbReference>
<dbReference type="Gene3D" id="3.30.930.10">
    <property type="entry name" value="Bira Bifunctional Protein, Domain 2"/>
    <property type="match status" value="1"/>
</dbReference>
<dbReference type="Gene3D" id="3.30.1360.30">
    <property type="entry name" value="GAD-like domain"/>
    <property type="match status" value="1"/>
</dbReference>
<dbReference type="Gene3D" id="2.40.50.140">
    <property type="entry name" value="Nucleic acid-binding proteins"/>
    <property type="match status" value="1"/>
</dbReference>
<dbReference type="HAMAP" id="MF_00044">
    <property type="entry name" value="Asp_tRNA_synth_type1"/>
    <property type="match status" value="1"/>
</dbReference>
<dbReference type="InterPro" id="IPR004364">
    <property type="entry name" value="Aa-tRNA-synt_II"/>
</dbReference>
<dbReference type="InterPro" id="IPR006195">
    <property type="entry name" value="aa-tRNA-synth_II"/>
</dbReference>
<dbReference type="InterPro" id="IPR045864">
    <property type="entry name" value="aa-tRNA-synth_II/BPL/LPL"/>
</dbReference>
<dbReference type="InterPro" id="IPR004524">
    <property type="entry name" value="Asp-tRNA-ligase_1"/>
</dbReference>
<dbReference type="InterPro" id="IPR047089">
    <property type="entry name" value="Asp-tRNA-ligase_1_N"/>
</dbReference>
<dbReference type="InterPro" id="IPR002312">
    <property type="entry name" value="Asp/Asn-tRNA-synth_IIb"/>
</dbReference>
<dbReference type="InterPro" id="IPR047090">
    <property type="entry name" value="AspRS_core"/>
</dbReference>
<dbReference type="InterPro" id="IPR004115">
    <property type="entry name" value="GAD-like_sf"/>
</dbReference>
<dbReference type="InterPro" id="IPR029351">
    <property type="entry name" value="GAD_dom"/>
</dbReference>
<dbReference type="InterPro" id="IPR012340">
    <property type="entry name" value="NA-bd_OB-fold"/>
</dbReference>
<dbReference type="InterPro" id="IPR004365">
    <property type="entry name" value="NA-bd_OB_tRNA"/>
</dbReference>
<dbReference type="NCBIfam" id="TIGR00459">
    <property type="entry name" value="aspS_bact"/>
    <property type="match status" value="1"/>
</dbReference>
<dbReference type="NCBIfam" id="NF001750">
    <property type="entry name" value="PRK00476.1"/>
    <property type="match status" value="1"/>
</dbReference>
<dbReference type="PANTHER" id="PTHR22594:SF5">
    <property type="entry name" value="ASPARTATE--TRNA LIGASE, MITOCHONDRIAL"/>
    <property type="match status" value="1"/>
</dbReference>
<dbReference type="PANTHER" id="PTHR22594">
    <property type="entry name" value="ASPARTYL/LYSYL-TRNA SYNTHETASE"/>
    <property type="match status" value="1"/>
</dbReference>
<dbReference type="Pfam" id="PF02938">
    <property type="entry name" value="GAD"/>
    <property type="match status" value="1"/>
</dbReference>
<dbReference type="Pfam" id="PF00152">
    <property type="entry name" value="tRNA-synt_2"/>
    <property type="match status" value="1"/>
</dbReference>
<dbReference type="Pfam" id="PF01336">
    <property type="entry name" value="tRNA_anti-codon"/>
    <property type="match status" value="1"/>
</dbReference>
<dbReference type="PRINTS" id="PR01042">
    <property type="entry name" value="TRNASYNTHASP"/>
</dbReference>
<dbReference type="SUPFAM" id="SSF55681">
    <property type="entry name" value="Class II aaRS and biotin synthetases"/>
    <property type="match status" value="1"/>
</dbReference>
<dbReference type="SUPFAM" id="SSF55261">
    <property type="entry name" value="GAD domain-like"/>
    <property type="match status" value="1"/>
</dbReference>
<dbReference type="SUPFAM" id="SSF50249">
    <property type="entry name" value="Nucleic acid-binding proteins"/>
    <property type="match status" value="1"/>
</dbReference>
<dbReference type="PROSITE" id="PS50862">
    <property type="entry name" value="AA_TRNA_LIGASE_II"/>
    <property type="match status" value="1"/>
</dbReference>
<accession>B6IN46</accession>
<evidence type="ECO:0000255" key="1">
    <source>
        <dbReference type="HAMAP-Rule" id="MF_00044"/>
    </source>
</evidence>
<protein>
    <recommendedName>
        <fullName evidence="1">Aspartate--tRNA(Asp/Asn) ligase</fullName>
        <ecNumber evidence="1">6.1.1.23</ecNumber>
    </recommendedName>
    <alternativeName>
        <fullName evidence="1">Aspartyl-tRNA synthetase</fullName>
        <shortName evidence="1">AspRS</shortName>
    </alternativeName>
    <alternativeName>
        <fullName evidence="1">Non-discriminating aspartyl-tRNA synthetase</fullName>
        <shortName evidence="1">ND-AspRS</shortName>
    </alternativeName>
</protein>
<proteinExistence type="inferred from homology"/>
<comment type="function">
    <text evidence="1">Aspartyl-tRNA synthetase with relaxed tRNA specificity since it is able to aspartylate not only its cognate tRNA(Asp) but also tRNA(Asn). Reaction proceeds in two steps: L-aspartate is first activated by ATP to form Asp-AMP and then transferred to the acceptor end of tRNA(Asp/Asn).</text>
</comment>
<comment type="catalytic activity">
    <reaction evidence="1">
        <text>tRNA(Asx) + L-aspartate + ATP = L-aspartyl-tRNA(Asx) + AMP + diphosphate</text>
        <dbReference type="Rhea" id="RHEA:18349"/>
        <dbReference type="Rhea" id="RHEA-COMP:9710"/>
        <dbReference type="Rhea" id="RHEA-COMP:9711"/>
        <dbReference type="ChEBI" id="CHEBI:29991"/>
        <dbReference type="ChEBI" id="CHEBI:30616"/>
        <dbReference type="ChEBI" id="CHEBI:33019"/>
        <dbReference type="ChEBI" id="CHEBI:78442"/>
        <dbReference type="ChEBI" id="CHEBI:78516"/>
        <dbReference type="ChEBI" id="CHEBI:456215"/>
        <dbReference type="EC" id="6.1.1.23"/>
    </reaction>
</comment>
<comment type="subunit">
    <text evidence="1">Homodimer.</text>
</comment>
<comment type="subcellular location">
    <subcellularLocation>
        <location evidence="1">Cytoplasm</location>
    </subcellularLocation>
</comment>
<comment type="similarity">
    <text evidence="1">Belongs to the class-II aminoacyl-tRNA synthetase family. Type 1 subfamily.</text>
</comment>
<keyword id="KW-0030">Aminoacyl-tRNA synthetase</keyword>
<keyword id="KW-0067">ATP-binding</keyword>
<keyword id="KW-0963">Cytoplasm</keyword>
<keyword id="KW-0436">Ligase</keyword>
<keyword id="KW-0547">Nucleotide-binding</keyword>
<keyword id="KW-0648">Protein biosynthesis</keyword>
<keyword id="KW-1185">Reference proteome</keyword>